<proteinExistence type="inferred from homology"/>
<comment type="function">
    <text evidence="1">Produces ATP from ADP in the presence of a proton gradient across the membrane. The catalytic sites are hosted primarily by the beta subunits.</text>
</comment>
<comment type="catalytic activity">
    <reaction evidence="1">
        <text>ATP + H2O + 4 H(+)(in) = ADP + phosphate + 5 H(+)(out)</text>
        <dbReference type="Rhea" id="RHEA:57720"/>
        <dbReference type="ChEBI" id="CHEBI:15377"/>
        <dbReference type="ChEBI" id="CHEBI:15378"/>
        <dbReference type="ChEBI" id="CHEBI:30616"/>
        <dbReference type="ChEBI" id="CHEBI:43474"/>
        <dbReference type="ChEBI" id="CHEBI:456216"/>
        <dbReference type="EC" id="7.1.2.2"/>
    </reaction>
</comment>
<comment type="subunit">
    <text evidence="1">F-type ATPases have 2 components, CF(1) - the catalytic core - and CF(0) - the membrane proton channel. CF(1) has five subunits: alpha(3), beta(3), gamma(1), delta(1), epsilon(1). CF(0) has three main subunits: a(1), b(2) and c(9-12). The alpha and beta chains form an alternating ring which encloses part of the gamma chain. CF(1) is attached to CF(0) by a central stalk formed by the gamma and epsilon chains, while a peripheral stalk is formed by the delta and b chains.</text>
</comment>
<comment type="subcellular location">
    <subcellularLocation>
        <location evidence="1">Cell inner membrane</location>
        <topology evidence="1">Peripheral membrane protein</topology>
    </subcellularLocation>
</comment>
<comment type="similarity">
    <text evidence="1">Belongs to the ATPase alpha/beta chains family.</text>
</comment>
<reference key="1">
    <citation type="submission" date="2007-10" db="EMBL/GenBank/DDBJ databases">
        <title>Complete sequence of Shewanella pealeana ATCC 700345.</title>
        <authorList>
            <consortium name="US DOE Joint Genome Institute"/>
            <person name="Copeland A."/>
            <person name="Lucas S."/>
            <person name="Lapidus A."/>
            <person name="Barry K."/>
            <person name="Glavina del Rio T."/>
            <person name="Dalin E."/>
            <person name="Tice H."/>
            <person name="Pitluck S."/>
            <person name="Chertkov O."/>
            <person name="Brettin T."/>
            <person name="Bruce D."/>
            <person name="Detter J.C."/>
            <person name="Han C."/>
            <person name="Schmutz J."/>
            <person name="Larimer F."/>
            <person name="Land M."/>
            <person name="Hauser L."/>
            <person name="Kyrpides N."/>
            <person name="Kim E."/>
            <person name="Zhao J.-S.Z."/>
            <person name="Manno D."/>
            <person name="Hawari J."/>
            <person name="Richardson P."/>
        </authorList>
    </citation>
    <scope>NUCLEOTIDE SEQUENCE [LARGE SCALE GENOMIC DNA]</scope>
    <source>
        <strain>ATCC 700345 / ANG-SQ1</strain>
    </source>
</reference>
<dbReference type="EC" id="7.1.2.2" evidence="1"/>
<dbReference type="EMBL" id="CP000851">
    <property type="protein sequence ID" value="ABV89550.1"/>
    <property type="molecule type" value="Genomic_DNA"/>
</dbReference>
<dbReference type="RefSeq" id="WP_012157427.1">
    <property type="nucleotide sequence ID" value="NC_009901.1"/>
</dbReference>
<dbReference type="SMR" id="A8HAG3"/>
<dbReference type="STRING" id="398579.Spea_4240"/>
<dbReference type="KEGG" id="spl:Spea_4240"/>
<dbReference type="eggNOG" id="COG0055">
    <property type="taxonomic scope" value="Bacteria"/>
</dbReference>
<dbReference type="HOGENOM" id="CLU_022398_0_2_6"/>
<dbReference type="OrthoDB" id="9801639at2"/>
<dbReference type="Proteomes" id="UP000002608">
    <property type="component" value="Chromosome"/>
</dbReference>
<dbReference type="GO" id="GO:0005886">
    <property type="term" value="C:plasma membrane"/>
    <property type="evidence" value="ECO:0007669"/>
    <property type="project" value="UniProtKB-SubCell"/>
</dbReference>
<dbReference type="GO" id="GO:0045259">
    <property type="term" value="C:proton-transporting ATP synthase complex"/>
    <property type="evidence" value="ECO:0007669"/>
    <property type="project" value="UniProtKB-KW"/>
</dbReference>
<dbReference type="GO" id="GO:0005524">
    <property type="term" value="F:ATP binding"/>
    <property type="evidence" value="ECO:0007669"/>
    <property type="project" value="UniProtKB-UniRule"/>
</dbReference>
<dbReference type="GO" id="GO:0016887">
    <property type="term" value="F:ATP hydrolysis activity"/>
    <property type="evidence" value="ECO:0007669"/>
    <property type="project" value="InterPro"/>
</dbReference>
<dbReference type="GO" id="GO:0046933">
    <property type="term" value="F:proton-transporting ATP synthase activity, rotational mechanism"/>
    <property type="evidence" value="ECO:0007669"/>
    <property type="project" value="UniProtKB-UniRule"/>
</dbReference>
<dbReference type="CDD" id="cd18110">
    <property type="entry name" value="ATP-synt_F1_beta_C"/>
    <property type="match status" value="1"/>
</dbReference>
<dbReference type="CDD" id="cd18115">
    <property type="entry name" value="ATP-synt_F1_beta_N"/>
    <property type="match status" value="1"/>
</dbReference>
<dbReference type="CDD" id="cd01133">
    <property type="entry name" value="F1-ATPase_beta_CD"/>
    <property type="match status" value="1"/>
</dbReference>
<dbReference type="FunFam" id="1.10.1140.10:FF:000001">
    <property type="entry name" value="ATP synthase subunit beta"/>
    <property type="match status" value="1"/>
</dbReference>
<dbReference type="FunFam" id="2.40.10.170:FF:000003">
    <property type="entry name" value="ATP synthase subunit beta"/>
    <property type="match status" value="1"/>
</dbReference>
<dbReference type="FunFam" id="3.40.50.300:FF:000004">
    <property type="entry name" value="ATP synthase subunit beta"/>
    <property type="match status" value="1"/>
</dbReference>
<dbReference type="Gene3D" id="2.40.10.170">
    <property type="match status" value="1"/>
</dbReference>
<dbReference type="Gene3D" id="1.10.1140.10">
    <property type="entry name" value="Bovine Mitochondrial F1-atpase, Atp Synthase Beta Chain, Chain D, domain 3"/>
    <property type="match status" value="1"/>
</dbReference>
<dbReference type="Gene3D" id="3.40.50.300">
    <property type="entry name" value="P-loop containing nucleotide triphosphate hydrolases"/>
    <property type="match status" value="1"/>
</dbReference>
<dbReference type="HAMAP" id="MF_01347">
    <property type="entry name" value="ATP_synth_beta_bact"/>
    <property type="match status" value="1"/>
</dbReference>
<dbReference type="InterPro" id="IPR003593">
    <property type="entry name" value="AAA+_ATPase"/>
</dbReference>
<dbReference type="InterPro" id="IPR055190">
    <property type="entry name" value="ATP-synt_VA_C"/>
</dbReference>
<dbReference type="InterPro" id="IPR005722">
    <property type="entry name" value="ATP_synth_F1_bsu"/>
</dbReference>
<dbReference type="InterPro" id="IPR020003">
    <property type="entry name" value="ATPase_a/bsu_AS"/>
</dbReference>
<dbReference type="InterPro" id="IPR050053">
    <property type="entry name" value="ATPase_alpha/beta_chains"/>
</dbReference>
<dbReference type="InterPro" id="IPR004100">
    <property type="entry name" value="ATPase_F1/V1/A1_a/bsu_N"/>
</dbReference>
<dbReference type="InterPro" id="IPR036121">
    <property type="entry name" value="ATPase_F1/V1/A1_a/bsu_N_sf"/>
</dbReference>
<dbReference type="InterPro" id="IPR000194">
    <property type="entry name" value="ATPase_F1/V1/A1_a/bsu_nucl-bd"/>
</dbReference>
<dbReference type="InterPro" id="IPR024034">
    <property type="entry name" value="ATPase_F1/V1_b/a_C"/>
</dbReference>
<dbReference type="InterPro" id="IPR027417">
    <property type="entry name" value="P-loop_NTPase"/>
</dbReference>
<dbReference type="NCBIfam" id="TIGR01039">
    <property type="entry name" value="atpD"/>
    <property type="match status" value="1"/>
</dbReference>
<dbReference type="PANTHER" id="PTHR15184">
    <property type="entry name" value="ATP SYNTHASE"/>
    <property type="match status" value="1"/>
</dbReference>
<dbReference type="PANTHER" id="PTHR15184:SF71">
    <property type="entry name" value="ATP SYNTHASE SUBUNIT BETA, MITOCHONDRIAL"/>
    <property type="match status" value="1"/>
</dbReference>
<dbReference type="Pfam" id="PF00006">
    <property type="entry name" value="ATP-synt_ab"/>
    <property type="match status" value="1"/>
</dbReference>
<dbReference type="Pfam" id="PF02874">
    <property type="entry name" value="ATP-synt_ab_N"/>
    <property type="match status" value="1"/>
</dbReference>
<dbReference type="Pfam" id="PF22919">
    <property type="entry name" value="ATP-synt_VA_C"/>
    <property type="match status" value="1"/>
</dbReference>
<dbReference type="SMART" id="SM00382">
    <property type="entry name" value="AAA"/>
    <property type="match status" value="1"/>
</dbReference>
<dbReference type="SUPFAM" id="SSF47917">
    <property type="entry name" value="C-terminal domain of alpha and beta subunits of F1 ATP synthase"/>
    <property type="match status" value="1"/>
</dbReference>
<dbReference type="SUPFAM" id="SSF50615">
    <property type="entry name" value="N-terminal domain of alpha and beta subunits of F1 ATP synthase"/>
    <property type="match status" value="1"/>
</dbReference>
<dbReference type="SUPFAM" id="SSF52540">
    <property type="entry name" value="P-loop containing nucleoside triphosphate hydrolases"/>
    <property type="match status" value="1"/>
</dbReference>
<dbReference type="PROSITE" id="PS00152">
    <property type="entry name" value="ATPASE_ALPHA_BETA"/>
    <property type="match status" value="1"/>
</dbReference>
<organism>
    <name type="scientific">Shewanella pealeana (strain ATCC 700345 / ANG-SQ1)</name>
    <dbReference type="NCBI Taxonomy" id="398579"/>
    <lineage>
        <taxon>Bacteria</taxon>
        <taxon>Pseudomonadati</taxon>
        <taxon>Pseudomonadota</taxon>
        <taxon>Gammaproteobacteria</taxon>
        <taxon>Alteromonadales</taxon>
        <taxon>Shewanellaceae</taxon>
        <taxon>Shewanella</taxon>
    </lineage>
</organism>
<gene>
    <name evidence="1" type="primary">atpD</name>
    <name type="ordered locus">Spea_4240</name>
</gene>
<feature type="chain" id="PRO_1000086924" description="ATP synthase subunit beta">
    <location>
        <begin position="1"/>
        <end position="458"/>
    </location>
</feature>
<feature type="binding site" evidence="1">
    <location>
        <begin position="148"/>
        <end position="155"/>
    </location>
    <ligand>
        <name>ATP</name>
        <dbReference type="ChEBI" id="CHEBI:30616"/>
    </ligand>
</feature>
<protein>
    <recommendedName>
        <fullName evidence="1">ATP synthase subunit beta</fullName>
        <ecNumber evidence="1">7.1.2.2</ecNumber>
    </recommendedName>
    <alternativeName>
        <fullName evidence="1">ATP synthase F1 sector subunit beta</fullName>
    </alternativeName>
    <alternativeName>
        <fullName evidence="1">F-ATPase subunit beta</fullName>
    </alternativeName>
</protein>
<sequence>MSTGTVVQVIGAVVDVEFPHDAVPQVYDALEIKSEGLVLEVQQQLGGGVVRTIAMGSSDGLRRGLEVVNSGSPITVPVGSATLGRIMNVLGEPVDEAGPIGEEDRYVIHREAPSYEDQSNTTELLETGIKVIDLVCPFAKGGKVGLFGGAGVGKTVNMMELINNIAKAHSGLSVFAGVGERTREGNDFYYEMEDSGVLDKVAMVYGQMNEPPGNRLRVALTGLTMAEKFRDEGKDVLFFVDNIYRYTLAGTEVSALLGRMPSAVGYQPTLAEEMGVLQERITSTKTGSITSVQAVYVPADDLTDPSPATTFAHLDATVVLSRNIASLGIYPAVDPLDSTSRQLDPQVVGQEHYDVANGVQTVLQRYKELKDIIAILGMDELSDEDKTTVFRARKIEKYLSQPFFVAEVFTGSPGKYVSLKDTIRGFKGILEGEFDHLPEQAFYMVGSIDEAVEKANKK</sequence>
<accession>A8HAG3</accession>
<keyword id="KW-0066">ATP synthesis</keyword>
<keyword id="KW-0067">ATP-binding</keyword>
<keyword id="KW-0997">Cell inner membrane</keyword>
<keyword id="KW-1003">Cell membrane</keyword>
<keyword id="KW-0139">CF(1)</keyword>
<keyword id="KW-0375">Hydrogen ion transport</keyword>
<keyword id="KW-0406">Ion transport</keyword>
<keyword id="KW-0472">Membrane</keyword>
<keyword id="KW-0547">Nucleotide-binding</keyword>
<keyword id="KW-1185">Reference proteome</keyword>
<keyword id="KW-1278">Translocase</keyword>
<keyword id="KW-0813">Transport</keyword>
<name>ATPB_SHEPA</name>
<evidence type="ECO:0000255" key="1">
    <source>
        <dbReference type="HAMAP-Rule" id="MF_01347"/>
    </source>
</evidence>